<proteinExistence type="inferred from homology"/>
<dbReference type="EC" id="3.1.3.18" evidence="1"/>
<dbReference type="EMBL" id="AB030825">
    <property type="protein sequence ID" value="BAA83143.1"/>
    <property type="molecule type" value="Genomic_DNA"/>
</dbReference>
<dbReference type="EMBL" id="AE004091">
    <property type="protein sequence ID" value="AAG03997.1"/>
    <property type="molecule type" value="Genomic_DNA"/>
</dbReference>
<dbReference type="PIR" id="T44528">
    <property type="entry name" value="T44528"/>
</dbReference>
<dbReference type="RefSeq" id="NP_249299.1">
    <property type="nucleotide sequence ID" value="NC_002516.2"/>
</dbReference>
<dbReference type="RefSeq" id="WP_003113205.1">
    <property type="nucleotide sequence ID" value="NZ_QZGE01000010.1"/>
</dbReference>
<dbReference type="SMR" id="Q9S586"/>
<dbReference type="FunCoup" id="Q9S586">
    <property type="interactions" value="530"/>
</dbReference>
<dbReference type="STRING" id="208964.PA0608"/>
<dbReference type="PaxDb" id="208964-PA0608"/>
<dbReference type="DNASU" id="882093"/>
<dbReference type="GeneID" id="882093"/>
<dbReference type="KEGG" id="pae:PA0608"/>
<dbReference type="PATRIC" id="fig|208964.12.peg.644"/>
<dbReference type="PseudoCAP" id="PA0608"/>
<dbReference type="HOGENOM" id="CLU_045011_19_1_6"/>
<dbReference type="InParanoid" id="Q9S586"/>
<dbReference type="OrthoDB" id="9776368at2"/>
<dbReference type="PhylomeDB" id="Q9S586"/>
<dbReference type="BioCyc" id="PAER208964:G1FZ6-615-MONOMER"/>
<dbReference type="UniPathway" id="UPA00865">
    <property type="reaction ID" value="UER00834"/>
</dbReference>
<dbReference type="Proteomes" id="UP000002438">
    <property type="component" value="Chromosome"/>
</dbReference>
<dbReference type="GO" id="GO:0005829">
    <property type="term" value="C:cytosol"/>
    <property type="evidence" value="ECO:0000318"/>
    <property type="project" value="GO_Central"/>
</dbReference>
<dbReference type="GO" id="GO:0046872">
    <property type="term" value="F:metal ion binding"/>
    <property type="evidence" value="ECO:0007669"/>
    <property type="project" value="UniProtKB-KW"/>
</dbReference>
<dbReference type="GO" id="GO:0008967">
    <property type="term" value="F:phosphoglycolate phosphatase activity"/>
    <property type="evidence" value="ECO:0000318"/>
    <property type="project" value="GO_Central"/>
</dbReference>
<dbReference type="GO" id="GO:0005975">
    <property type="term" value="P:carbohydrate metabolic process"/>
    <property type="evidence" value="ECO:0007669"/>
    <property type="project" value="InterPro"/>
</dbReference>
<dbReference type="GO" id="GO:0006281">
    <property type="term" value="P:DNA repair"/>
    <property type="evidence" value="ECO:0000318"/>
    <property type="project" value="GO_Central"/>
</dbReference>
<dbReference type="GO" id="GO:0046295">
    <property type="term" value="P:glycolate biosynthetic process"/>
    <property type="evidence" value="ECO:0007669"/>
    <property type="project" value="UniProtKB-UniRule"/>
</dbReference>
<dbReference type="CDD" id="cd16417">
    <property type="entry name" value="HAD_PGPase"/>
    <property type="match status" value="1"/>
</dbReference>
<dbReference type="FunFam" id="3.40.50.1000:FF:000022">
    <property type="entry name" value="Phosphoglycolate phosphatase"/>
    <property type="match status" value="1"/>
</dbReference>
<dbReference type="Gene3D" id="3.40.50.1000">
    <property type="entry name" value="HAD superfamily/HAD-like"/>
    <property type="match status" value="1"/>
</dbReference>
<dbReference type="Gene3D" id="1.10.150.240">
    <property type="entry name" value="Putative phosphatase, domain 2"/>
    <property type="match status" value="1"/>
</dbReference>
<dbReference type="HAMAP" id="MF_00495">
    <property type="entry name" value="GPH_hydrolase_bact"/>
    <property type="match status" value="1"/>
</dbReference>
<dbReference type="InterPro" id="IPR050155">
    <property type="entry name" value="HAD-like_hydrolase_sf"/>
</dbReference>
<dbReference type="InterPro" id="IPR036412">
    <property type="entry name" value="HAD-like_sf"/>
</dbReference>
<dbReference type="InterPro" id="IPR006439">
    <property type="entry name" value="HAD-SF_hydro_IA"/>
</dbReference>
<dbReference type="InterPro" id="IPR041492">
    <property type="entry name" value="HAD_2"/>
</dbReference>
<dbReference type="InterPro" id="IPR023214">
    <property type="entry name" value="HAD_sf"/>
</dbReference>
<dbReference type="InterPro" id="IPR023198">
    <property type="entry name" value="PGP-like_dom2"/>
</dbReference>
<dbReference type="InterPro" id="IPR037512">
    <property type="entry name" value="PGPase_prok"/>
</dbReference>
<dbReference type="NCBIfam" id="TIGR01549">
    <property type="entry name" value="HAD-SF-IA-v1"/>
    <property type="match status" value="1"/>
</dbReference>
<dbReference type="NCBIfam" id="TIGR01509">
    <property type="entry name" value="HAD-SF-IA-v3"/>
    <property type="match status" value="1"/>
</dbReference>
<dbReference type="NCBIfam" id="TIGR01449">
    <property type="entry name" value="PGP_bact"/>
    <property type="match status" value="1"/>
</dbReference>
<dbReference type="NCBIfam" id="NF009695">
    <property type="entry name" value="PRK13222.1-2"/>
    <property type="match status" value="1"/>
</dbReference>
<dbReference type="NCBIfam" id="NF009698">
    <property type="entry name" value="PRK13223.1"/>
    <property type="match status" value="1"/>
</dbReference>
<dbReference type="PANTHER" id="PTHR43434">
    <property type="entry name" value="PHOSPHOGLYCOLATE PHOSPHATASE"/>
    <property type="match status" value="1"/>
</dbReference>
<dbReference type="PANTHER" id="PTHR43434:SF1">
    <property type="entry name" value="PHOSPHOGLYCOLATE PHOSPHATASE"/>
    <property type="match status" value="1"/>
</dbReference>
<dbReference type="Pfam" id="PF13419">
    <property type="entry name" value="HAD_2"/>
    <property type="match status" value="1"/>
</dbReference>
<dbReference type="PRINTS" id="PR00413">
    <property type="entry name" value="HADHALOGNASE"/>
</dbReference>
<dbReference type="SFLD" id="SFLDG01135">
    <property type="entry name" value="C1.5.6:_HAD__Beta-PGM__Phospha"/>
    <property type="match status" value="1"/>
</dbReference>
<dbReference type="SFLD" id="SFLDS00003">
    <property type="entry name" value="Haloacid_Dehalogenase"/>
    <property type="match status" value="1"/>
</dbReference>
<dbReference type="SUPFAM" id="SSF56784">
    <property type="entry name" value="HAD-like"/>
    <property type="match status" value="1"/>
</dbReference>
<protein>
    <recommendedName>
        <fullName evidence="1">Phosphoglycolate phosphatase 1</fullName>
        <shortName evidence="1">PGP 1</shortName>
        <shortName evidence="1">PGPase 1</shortName>
        <ecNumber evidence="1">3.1.3.18</ecNumber>
    </recommendedName>
</protein>
<organism>
    <name type="scientific">Pseudomonas aeruginosa (strain ATCC 15692 / DSM 22644 / CIP 104116 / JCM 14847 / LMG 12228 / 1C / PRS 101 / PAO1)</name>
    <dbReference type="NCBI Taxonomy" id="208964"/>
    <lineage>
        <taxon>Bacteria</taxon>
        <taxon>Pseudomonadati</taxon>
        <taxon>Pseudomonadota</taxon>
        <taxon>Gammaproteobacteria</taxon>
        <taxon>Pseudomonadales</taxon>
        <taxon>Pseudomonadaceae</taxon>
        <taxon>Pseudomonas</taxon>
    </lineage>
</organism>
<keyword id="KW-0119">Carbohydrate metabolism</keyword>
<keyword id="KW-0378">Hydrolase</keyword>
<keyword id="KW-0460">Magnesium</keyword>
<keyword id="KW-0479">Metal-binding</keyword>
<keyword id="KW-1185">Reference proteome</keyword>
<accession>Q9S586</accession>
<feature type="chain" id="PRO_0000108033" description="Phosphoglycolate phosphatase 1">
    <location>
        <begin position="1"/>
        <end position="272"/>
    </location>
</feature>
<feature type="active site" description="Nucleophile" evidence="1">
    <location>
        <position position="19"/>
    </location>
</feature>
<feature type="binding site" evidence="1">
    <location>
        <position position="19"/>
    </location>
    <ligand>
        <name>Mg(2+)</name>
        <dbReference type="ChEBI" id="CHEBI:18420"/>
    </ligand>
</feature>
<feature type="binding site" evidence="1">
    <location>
        <position position="21"/>
    </location>
    <ligand>
        <name>Mg(2+)</name>
        <dbReference type="ChEBI" id="CHEBI:18420"/>
    </ligand>
</feature>
<feature type="binding site" evidence="1">
    <location>
        <position position="182"/>
    </location>
    <ligand>
        <name>Mg(2+)</name>
        <dbReference type="ChEBI" id="CHEBI:18420"/>
    </ligand>
</feature>
<gene>
    <name evidence="1" type="primary">gph1</name>
    <name type="ordered locus">PA0608</name>
</gene>
<evidence type="ECO:0000255" key="1">
    <source>
        <dbReference type="HAMAP-Rule" id="MF_00495"/>
    </source>
</evidence>
<name>GPH1_PSEAE</name>
<reference key="1">
    <citation type="submission" date="1999-08" db="EMBL/GenBank/DDBJ databases">
        <title>Genetic relationship between bacteriocins and bacteriophages.</title>
        <authorList>
            <person name="Nakayama K."/>
            <person name="Takashima K."/>
            <person name="Ishihara H."/>
            <person name="Shinomiya T."/>
            <person name="Kageyama M."/>
            <person name="Kanaya S."/>
            <person name="Ohnishi M."/>
            <person name="Murata T."/>
            <person name="Terawaki Y."/>
            <person name="Mori H."/>
            <person name="Hayashi T."/>
        </authorList>
    </citation>
    <scope>NUCLEOTIDE SEQUENCE [GENOMIC DNA]</scope>
    <source>
        <strain>ATCC 15692 / DSM 22644 / CIP 104116 / JCM 14847 / LMG 12228 / 1C / PRS 101 / PAO1</strain>
    </source>
</reference>
<reference key="2">
    <citation type="journal article" date="2000" name="Nature">
        <title>Complete genome sequence of Pseudomonas aeruginosa PAO1, an opportunistic pathogen.</title>
        <authorList>
            <person name="Stover C.K."/>
            <person name="Pham X.-Q.T."/>
            <person name="Erwin A.L."/>
            <person name="Mizoguchi S.D."/>
            <person name="Warrener P."/>
            <person name="Hickey M.J."/>
            <person name="Brinkman F.S.L."/>
            <person name="Hufnagle W.O."/>
            <person name="Kowalik D.J."/>
            <person name="Lagrou M."/>
            <person name="Garber R.L."/>
            <person name="Goltry L."/>
            <person name="Tolentino E."/>
            <person name="Westbrock-Wadman S."/>
            <person name="Yuan Y."/>
            <person name="Brody L.L."/>
            <person name="Coulter S.N."/>
            <person name="Folger K.R."/>
            <person name="Kas A."/>
            <person name="Larbig K."/>
            <person name="Lim R.M."/>
            <person name="Smith K.A."/>
            <person name="Spencer D.H."/>
            <person name="Wong G.K.-S."/>
            <person name="Wu Z."/>
            <person name="Paulsen I.T."/>
            <person name="Reizer J."/>
            <person name="Saier M.H. Jr."/>
            <person name="Hancock R.E.W."/>
            <person name="Lory S."/>
            <person name="Olson M.V."/>
        </authorList>
    </citation>
    <scope>NUCLEOTIDE SEQUENCE [LARGE SCALE GENOMIC DNA]</scope>
    <source>
        <strain>ATCC 15692 / DSM 22644 / CIP 104116 / JCM 14847 / LMG 12228 / 1C / PRS 101 / PAO1</strain>
    </source>
</reference>
<sequence length="272" mass="29812">MSAAEPFFATRLPRLVMFDLDGTLVDSVPDLTAAVDSMLASFGRPPAGIEKVRQWIGNGARVLVRRALAGSIEHDGIGEEETEAALALFMEAYADSHALTEVYPGVVDTLKWLKRNGVEMALITNKPERFVAPLLDEMKLGRYFRWIIGGDTLPQQKPDPAALLFVMKMAGIEPEDALFVGDSRNDVLAAKAAGVRCAALTYGYNHGRPIAEEAPTLVIDNLRDLLPCADQAAEIVLPDDSLSPSDQRDQAVAVSKLWMKVIKALARWRWRA</sequence>
<comment type="function">
    <text evidence="1">Specifically catalyzes the dephosphorylation of 2-phosphoglycolate. Is involved in the dissimilation of the intracellular 2-phosphoglycolate formed during the DNA repair of 3'-phosphoglycolate ends, a major class of DNA lesions induced by oxidative stress.</text>
</comment>
<comment type="catalytic activity">
    <reaction evidence="1">
        <text>2-phosphoglycolate + H2O = glycolate + phosphate</text>
        <dbReference type="Rhea" id="RHEA:14369"/>
        <dbReference type="ChEBI" id="CHEBI:15377"/>
        <dbReference type="ChEBI" id="CHEBI:29805"/>
        <dbReference type="ChEBI" id="CHEBI:43474"/>
        <dbReference type="ChEBI" id="CHEBI:58033"/>
        <dbReference type="EC" id="3.1.3.18"/>
    </reaction>
</comment>
<comment type="cofactor">
    <cofactor evidence="1">
        <name>Mg(2+)</name>
        <dbReference type="ChEBI" id="CHEBI:18420"/>
    </cofactor>
</comment>
<comment type="pathway">
    <text evidence="1">Organic acid metabolism; glycolate biosynthesis; glycolate from 2-phosphoglycolate: step 1/1.</text>
</comment>
<comment type="similarity">
    <text evidence="1">Belongs to the HAD-like hydrolase superfamily. CbbY/CbbZ/Gph/YieH family.</text>
</comment>